<evidence type="ECO:0000250" key="1"/>
<evidence type="ECO:0000255" key="2"/>
<evidence type="ECO:0000255" key="3">
    <source>
        <dbReference type="PROSITE-ProRule" id="PRU01161"/>
    </source>
</evidence>
<evidence type="ECO:0000256" key="4">
    <source>
        <dbReference type="SAM" id="MobiDB-lite"/>
    </source>
</evidence>
<evidence type="ECO:0000305" key="5"/>
<gene>
    <name type="primary">nte1</name>
    <name type="ORF">An14g03050</name>
</gene>
<accession>A2R350</accession>
<protein>
    <recommendedName>
        <fullName>Lysophospholipase nte1</fullName>
        <ecNumber>3.1.1.5</ecNumber>
    </recommendedName>
    <alternativeName>
        <fullName>Intracellular phospholipase B</fullName>
    </alternativeName>
    <alternativeName>
        <fullName>Neuropathy target esterase homolog</fullName>
    </alternativeName>
</protein>
<feature type="chain" id="PRO_0000295311" description="Lysophospholipase nte1">
    <location>
        <begin position="1"/>
        <end position="1531"/>
    </location>
</feature>
<feature type="topological domain" description="Cytoplasmic" evidence="1">
    <location>
        <begin position="1"/>
        <end position="72"/>
    </location>
</feature>
<feature type="transmembrane region" description="Helical" evidence="2">
    <location>
        <begin position="73"/>
        <end position="93"/>
    </location>
</feature>
<feature type="topological domain" description="Lumenal" evidence="1">
    <location>
        <begin position="94"/>
        <end position="115"/>
    </location>
</feature>
<feature type="transmembrane region" description="Helical" evidence="2">
    <location>
        <begin position="116"/>
        <end position="136"/>
    </location>
</feature>
<feature type="topological domain" description="Cytoplasmic" evidence="1">
    <location>
        <begin position="137"/>
        <end position="1531"/>
    </location>
</feature>
<feature type="domain" description="PNPLA" evidence="3">
    <location>
        <begin position="1228"/>
        <end position="1392"/>
    </location>
</feature>
<feature type="region of interest" description="Disordered" evidence="4">
    <location>
        <begin position="242"/>
        <end position="265"/>
    </location>
</feature>
<feature type="region of interest" description="Disordered" evidence="4">
    <location>
        <begin position="303"/>
        <end position="385"/>
    </location>
</feature>
<feature type="region of interest" description="Disordered" evidence="4">
    <location>
        <begin position="766"/>
        <end position="789"/>
    </location>
</feature>
<feature type="region of interest" description="Disordered" evidence="4">
    <location>
        <begin position="1510"/>
        <end position="1531"/>
    </location>
</feature>
<feature type="short sequence motif" description="GXGXXG" evidence="3">
    <location>
        <begin position="1232"/>
        <end position="1237"/>
    </location>
</feature>
<feature type="short sequence motif" description="GXSXG" evidence="3">
    <location>
        <begin position="1259"/>
        <end position="1263"/>
    </location>
</feature>
<feature type="short sequence motif" description="DGA/G" evidence="3">
    <location>
        <begin position="1379"/>
        <end position="1381"/>
    </location>
</feature>
<feature type="compositionally biased region" description="Basic and acidic residues" evidence="4">
    <location>
        <begin position="325"/>
        <end position="343"/>
    </location>
</feature>
<feature type="compositionally biased region" description="Low complexity" evidence="4">
    <location>
        <begin position="768"/>
        <end position="779"/>
    </location>
</feature>
<feature type="active site" description="Nucleophile" evidence="3">
    <location>
        <position position="1261"/>
    </location>
</feature>
<feature type="active site" description="Proton acceptor" evidence="3">
    <location>
        <position position="1379"/>
    </location>
</feature>
<feature type="binding site">
    <location>
        <begin position="689"/>
        <end position="809"/>
    </location>
    <ligand>
        <name>a nucleoside 3',5'-cyclic phosphate</name>
        <dbReference type="ChEBI" id="CHEBI:58464"/>
        <label>1</label>
    </ligand>
</feature>
<feature type="binding site">
    <location>
        <begin position="849"/>
        <end position="969"/>
    </location>
    <ligand>
        <name>a nucleoside 3',5'-cyclic phosphate</name>
        <dbReference type="ChEBI" id="CHEBI:58464"/>
        <label>2</label>
    </ligand>
</feature>
<reference key="1">
    <citation type="journal article" date="2007" name="Nat. Biotechnol.">
        <title>Genome sequencing and analysis of the versatile cell factory Aspergillus niger CBS 513.88.</title>
        <authorList>
            <person name="Pel H.J."/>
            <person name="de Winde J.H."/>
            <person name="Archer D.B."/>
            <person name="Dyer P.S."/>
            <person name="Hofmann G."/>
            <person name="Schaap P.J."/>
            <person name="Turner G."/>
            <person name="de Vries R.P."/>
            <person name="Albang R."/>
            <person name="Albermann K."/>
            <person name="Andersen M.R."/>
            <person name="Bendtsen J.D."/>
            <person name="Benen J.A.E."/>
            <person name="van den Berg M."/>
            <person name="Breestraat S."/>
            <person name="Caddick M.X."/>
            <person name="Contreras R."/>
            <person name="Cornell M."/>
            <person name="Coutinho P.M."/>
            <person name="Danchin E.G.J."/>
            <person name="Debets A.J.M."/>
            <person name="Dekker P."/>
            <person name="van Dijck P.W.M."/>
            <person name="van Dijk A."/>
            <person name="Dijkhuizen L."/>
            <person name="Driessen A.J.M."/>
            <person name="d'Enfert C."/>
            <person name="Geysens S."/>
            <person name="Goosen C."/>
            <person name="Groot G.S.P."/>
            <person name="de Groot P.W.J."/>
            <person name="Guillemette T."/>
            <person name="Henrissat B."/>
            <person name="Herweijer M."/>
            <person name="van den Hombergh J.P.T.W."/>
            <person name="van den Hondel C.A.M.J.J."/>
            <person name="van der Heijden R.T.J.M."/>
            <person name="van der Kaaij R.M."/>
            <person name="Klis F.M."/>
            <person name="Kools H.J."/>
            <person name="Kubicek C.P."/>
            <person name="van Kuyk P.A."/>
            <person name="Lauber J."/>
            <person name="Lu X."/>
            <person name="van der Maarel M.J.E.C."/>
            <person name="Meulenberg R."/>
            <person name="Menke H."/>
            <person name="Mortimer M.A."/>
            <person name="Nielsen J."/>
            <person name="Oliver S.G."/>
            <person name="Olsthoorn M."/>
            <person name="Pal K."/>
            <person name="van Peij N.N.M.E."/>
            <person name="Ram A.F.J."/>
            <person name="Rinas U."/>
            <person name="Roubos J.A."/>
            <person name="Sagt C.M.J."/>
            <person name="Schmoll M."/>
            <person name="Sun J."/>
            <person name="Ussery D."/>
            <person name="Varga J."/>
            <person name="Vervecken W."/>
            <person name="van de Vondervoort P.J.J."/>
            <person name="Wedler H."/>
            <person name="Woesten H.A.B."/>
            <person name="Zeng A.-P."/>
            <person name="van Ooyen A.J.J."/>
            <person name="Visser J."/>
            <person name="Stam H."/>
        </authorList>
    </citation>
    <scope>NUCLEOTIDE SEQUENCE [LARGE SCALE GENOMIC DNA]</scope>
    <source>
        <strain>ATCC MYA-4892 / CBS 513.88 / FGSC A1513</strain>
    </source>
</reference>
<sequence>MATGDGIIAAPPSLESSSLDPLHVLPASSSTAARSLATSIPALTASFSVVSGFSSHLPPPPVTPPAPSTMVGWIGWIFSFIFQVIPSVLYWIVTFTTITLPTWLFTLFSMSLTFTMNFTTLLLIALAVVSTISWFIRYRFLNMYSRLPPEPQRKEPQLDLFPDVPDSDTKPGLANYLDEFLSAIKVFGYLERPVFHELTRTMQTRKLIAGETLLLEEEKGFCLVVDGLVQIFVKSMRDRKSGSDEELNRMAGESSDEDDHRPDGRQGYQLLTEVKNGASMSSLFSILSLFTEDVQLRYADSSASSASSIGPGLAIGPDSFPASPREMDDSPHVYQGDRLDPASHRNSTAEDLPAVPPLNLGESQVPPAHSARSESRKYSGKTRRKSVHPDIVARAMVDTTIAIIPASAFRRLTRVYPKATAHIVQVILTRLQRVTFATAHSYLGLNNEVLGIEKQMTKFTTYDLPNELRGSALDRLKDKFIKERDRLGQEEVTKGIALHNPYGGRRPRSSSFRRKEAALQAKMVASKRPVSMVAQDSALSDRENSGVSPGDLLSTIQLSRFGPRYEHLAPRLLSPLTEKEHSPLRSPSPMIPGRASPFHRKESLDEDALFRESILECIMKGIGLTGSTNDFLRKSSHPSGDVSPKLLSYDSRRQKAVFSNNAFGFIDPYEGSADGESESMMSMSVTSAGGTSPIVNLREELRNDIEIVYFPQGSVLVEQGERHPGLYYVVDGFLDVGIPVDDKEEDLVGSSRPAHEELFPMLRRTNTSSSRVSGSAAAANDPRRKKQSRRSLYLIKPGGIQGYVGAVASYRSYTDVVAKTDVYVGFLPRASLERIAERYPLALLTLAKRLTSLLPRLLLHIDFALEWVQVSAGQVIYHQGDESDAIYLALNGRLRSVHEGPNGKMTVVGEYGQGESVGELEVMTESTRPATLHAIRDTELAKFPRTLFNSLAQEHPGITIQVSKLIAQRMRDLVETPLAEKGGEPGVSGTVKTAKSTLNLRTVGILPVTAGVPVVEFGNRLLQALHQIGVTNGATSLNQAAILNHLGRHAFSKMGKLKLSQYLADLEEKYGMVLYIADTSVNSPWTQTCITQADCILLVGLAESTPSIGEYERFLLGMKTTARKELVLLHGERYCPPGLTRQWLKNRVWINGGHHHVQMAFRLTAEPSHPQTKRFGTVLKQRVQVIQAEIQKYTSRRIRQSPLYSAQTPFKGDFHRLARRLCGRSVGLVLGGGGARGIAQVGVIKALEEAGIPIDVIGGTSIGSFIGALYARDADVVPMYGRAKKFAGRMGSIWRFALDLTYPTVSYTTGHEFNRGIFKTFGDSQIEDFWLEFYCNTTNISRSRAEYHSSGYTWRYVRASMSLAGLIPPICDEGSMLLDGGYIDNLTVDHMKGLGADVIFAVDVGSIDDNTPQVYGDSLSGFWAVVNRWNPFSSCPNPPTLSEIQARLAYVSSIENLERAKNTPGCLYMRPPIDPYGTLDFAKFDEIYQLGYAYGKNYLEKLKREGSLPLPEETEEKKKLQRTLAPRRASI</sequence>
<name>NTE1_ASPNC</name>
<organism>
    <name type="scientific">Aspergillus niger (strain ATCC MYA-4892 / CBS 513.88 / FGSC A1513)</name>
    <dbReference type="NCBI Taxonomy" id="425011"/>
    <lineage>
        <taxon>Eukaryota</taxon>
        <taxon>Fungi</taxon>
        <taxon>Dikarya</taxon>
        <taxon>Ascomycota</taxon>
        <taxon>Pezizomycotina</taxon>
        <taxon>Eurotiomycetes</taxon>
        <taxon>Eurotiomycetidae</taxon>
        <taxon>Eurotiales</taxon>
        <taxon>Aspergillaceae</taxon>
        <taxon>Aspergillus</taxon>
        <taxon>Aspergillus subgen. Circumdati</taxon>
    </lineage>
</organism>
<proteinExistence type="inferred from homology"/>
<keyword id="KW-0256">Endoplasmic reticulum</keyword>
<keyword id="KW-0378">Hydrolase</keyword>
<keyword id="KW-0442">Lipid degradation</keyword>
<keyword id="KW-0443">Lipid metabolism</keyword>
<keyword id="KW-0472">Membrane</keyword>
<keyword id="KW-1185">Reference proteome</keyword>
<keyword id="KW-0677">Repeat</keyword>
<keyword id="KW-0812">Transmembrane</keyword>
<keyword id="KW-1133">Transmembrane helix</keyword>
<dbReference type="EC" id="3.1.1.5"/>
<dbReference type="EMBL" id="AM270320">
    <property type="protein sequence ID" value="CAK46542.1"/>
    <property type="status" value="ALT_SEQ"/>
    <property type="molecule type" value="Genomic_DNA"/>
</dbReference>
<dbReference type="SMR" id="A2R350"/>
<dbReference type="EnsemblFungi" id="CAK46542">
    <property type="protein sequence ID" value="CAK46542"/>
    <property type="gene ID" value="An14g03050"/>
</dbReference>
<dbReference type="Proteomes" id="UP000006706">
    <property type="component" value="Chromosome 1R"/>
</dbReference>
<dbReference type="GO" id="GO:0005789">
    <property type="term" value="C:endoplasmic reticulum membrane"/>
    <property type="evidence" value="ECO:0007669"/>
    <property type="project" value="UniProtKB-SubCell"/>
</dbReference>
<dbReference type="GO" id="GO:0004622">
    <property type="term" value="F:lysophospholipase activity"/>
    <property type="evidence" value="ECO:0007669"/>
    <property type="project" value="UniProtKB-EC"/>
</dbReference>
<dbReference type="GO" id="GO:0034638">
    <property type="term" value="P:phosphatidylcholine catabolic process"/>
    <property type="evidence" value="ECO:0007669"/>
    <property type="project" value="EnsemblFungi"/>
</dbReference>
<dbReference type="GO" id="GO:0071071">
    <property type="term" value="P:regulation of phospholipid biosynthetic process"/>
    <property type="evidence" value="ECO:0007669"/>
    <property type="project" value="EnsemblFungi"/>
</dbReference>
<dbReference type="CDD" id="cd00038">
    <property type="entry name" value="CAP_ED"/>
    <property type="match status" value="2"/>
</dbReference>
<dbReference type="FunFam" id="2.60.120.10:FF:000062">
    <property type="entry name" value="Lysophospholipase NTE1"/>
    <property type="match status" value="1"/>
</dbReference>
<dbReference type="FunFam" id="3.40.1090.10:FF:000007">
    <property type="entry name" value="Lysophospholipase NTE1"/>
    <property type="match status" value="1"/>
</dbReference>
<dbReference type="FunFam" id="3.40.1090.10:FF:000018">
    <property type="entry name" value="Lysophospholipase NTE1"/>
    <property type="match status" value="1"/>
</dbReference>
<dbReference type="Gene3D" id="3.40.1090.10">
    <property type="entry name" value="Cytosolic phospholipase A2 catalytic domain"/>
    <property type="match status" value="2"/>
</dbReference>
<dbReference type="Gene3D" id="2.60.120.10">
    <property type="entry name" value="Jelly Rolls"/>
    <property type="match status" value="3"/>
</dbReference>
<dbReference type="InterPro" id="IPR016035">
    <property type="entry name" value="Acyl_Trfase/lysoPLipase"/>
</dbReference>
<dbReference type="InterPro" id="IPR000595">
    <property type="entry name" value="cNMP-bd_dom"/>
</dbReference>
<dbReference type="InterPro" id="IPR018490">
    <property type="entry name" value="cNMP-bd_dom_sf"/>
</dbReference>
<dbReference type="InterPro" id="IPR050301">
    <property type="entry name" value="NTE"/>
</dbReference>
<dbReference type="InterPro" id="IPR056556">
    <property type="entry name" value="NTE1_P-loop_dom"/>
</dbReference>
<dbReference type="InterPro" id="IPR002641">
    <property type="entry name" value="PNPLA_dom"/>
</dbReference>
<dbReference type="InterPro" id="IPR014710">
    <property type="entry name" value="RmlC-like_jellyroll"/>
</dbReference>
<dbReference type="PANTHER" id="PTHR14226:SF29">
    <property type="entry name" value="NEUROPATHY TARGET ESTERASE SWS"/>
    <property type="match status" value="1"/>
</dbReference>
<dbReference type="PANTHER" id="PTHR14226">
    <property type="entry name" value="NEUROPATHY TARGET ESTERASE/SWISS CHEESE D.MELANOGASTER"/>
    <property type="match status" value="1"/>
</dbReference>
<dbReference type="Pfam" id="PF00027">
    <property type="entry name" value="cNMP_binding"/>
    <property type="match status" value="1"/>
</dbReference>
<dbReference type="Pfam" id="PF24179">
    <property type="entry name" value="NTE_Ploop"/>
    <property type="match status" value="1"/>
</dbReference>
<dbReference type="Pfam" id="PF01734">
    <property type="entry name" value="Patatin"/>
    <property type="match status" value="1"/>
</dbReference>
<dbReference type="SMART" id="SM00100">
    <property type="entry name" value="cNMP"/>
    <property type="match status" value="1"/>
</dbReference>
<dbReference type="SUPFAM" id="SSF51206">
    <property type="entry name" value="cAMP-binding domain-like"/>
    <property type="match status" value="3"/>
</dbReference>
<dbReference type="SUPFAM" id="SSF52151">
    <property type="entry name" value="FabD/lysophospholipase-like"/>
    <property type="match status" value="1"/>
</dbReference>
<dbReference type="PROSITE" id="PS50042">
    <property type="entry name" value="CNMP_BINDING_3"/>
    <property type="match status" value="2"/>
</dbReference>
<dbReference type="PROSITE" id="PS51635">
    <property type="entry name" value="PNPLA"/>
    <property type="match status" value="1"/>
</dbReference>
<comment type="function">
    <text evidence="1">Intracellular phospholipase B that catalyzes the double deacylation of phosphatidylcholine (PC) to glycerophosphocholine (GroPCho). Plays an important role in membrane lipid homeostasis. Responsible for the rapid PC turnover in response to inositol, elevated temperatures, or when choline is present in the growth medium (By similarity).</text>
</comment>
<comment type="catalytic activity">
    <reaction>
        <text>a 1-acyl-sn-glycero-3-phosphocholine + H2O = sn-glycerol 3-phosphocholine + a fatty acid + H(+)</text>
        <dbReference type="Rhea" id="RHEA:15177"/>
        <dbReference type="ChEBI" id="CHEBI:15377"/>
        <dbReference type="ChEBI" id="CHEBI:15378"/>
        <dbReference type="ChEBI" id="CHEBI:16870"/>
        <dbReference type="ChEBI" id="CHEBI:28868"/>
        <dbReference type="ChEBI" id="CHEBI:58168"/>
        <dbReference type="EC" id="3.1.1.5"/>
    </reaction>
</comment>
<comment type="activity regulation">
    <text evidence="1">Inhibited by organophosphorus esters.</text>
</comment>
<comment type="subcellular location">
    <subcellularLocation>
        <location evidence="1">Endoplasmic reticulum membrane</location>
        <topology evidence="1">Multi-pass membrane protein</topology>
    </subcellularLocation>
</comment>
<comment type="similarity">
    <text evidence="5">Belongs to the NTE family.</text>
</comment>
<comment type="sequence caution" evidence="5">
    <conflict type="erroneous gene model prediction">
        <sequence resource="EMBL-CDS" id="CAK46542"/>
    </conflict>
</comment>